<accession>Q3A2J4</accession>
<proteinExistence type="inferred from homology"/>
<protein>
    <recommendedName>
        <fullName evidence="1">Shikimate kinase 2</fullName>
        <shortName evidence="1">SK 2</shortName>
        <ecNumber evidence="1">2.7.1.71</ecNumber>
    </recommendedName>
</protein>
<gene>
    <name evidence="1" type="primary">aroK2</name>
    <name type="ordered locus">Pcar_2174</name>
</gene>
<evidence type="ECO:0000255" key="1">
    <source>
        <dbReference type="HAMAP-Rule" id="MF_00109"/>
    </source>
</evidence>
<name>AROK2_SYNC1</name>
<sequence>MTQTIFMVGARAAGKTTIGQALANALSYPFVDTDLYMLETTNLTVADVVVTEGWEGFRRRESEALRTVTKPGIVVATGGGMVLSEENRDFMRANGTVFYLSAPAEVLAARLEAYPDAGQRPTLTGRPIVEEVSEVLAARENLYRSAAHHVLDASVAPEAVLVQALELLKKQA</sequence>
<organism>
    <name type="scientific">Syntrophotalea carbinolica (strain DSM 2380 / NBRC 103641 / GraBd1)</name>
    <name type="common">Pelobacter carbinolicus</name>
    <dbReference type="NCBI Taxonomy" id="338963"/>
    <lineage>
        <taxon>Bacteria</taxon>
        <taxon>Pseudomonadati</taxon>
        <taxon>Thermodesulfobacteriota</taxon>
        <taxon>Desulfuromonadia</taxon>
        <taxon>Desulfuromonadales</taxon>
        <taxon>Syntrophotaleaceae</taxon>
        <taxon>Syntrophotalea</taxon>
    </lineage>
</organism>
<keyword id="KW-0028">Amino-acid biosynthesis</keyword>
<keyword id="KW-0057">Aromatic amino acid biosynthesis</keyword>
<keyword id="KW-0067">ATP-binding</keyword>
<keyword id="KW-0963">Cytoplasm</keyword>
<keyword id="KW-0418">Kinase</keyword>
<keyword id="KW-0547">Nucleotide-binding</keyword>
<keyword id="KW-1185">Reference proteome</keyword>
<keyword id="KW-0808">Transferase</keyword>
<feature type="chain" id="PRO_0000237904" description="Shikimate kinase 2">
    <location>
        <begin position="1"/>
        <end position="172"/>
    </location>
</feature>
<feature type="binding site" evidence="1">
    <location>
        <begin position="9"/>
        <end position="16"/>
    </location>
    <ligand>
        <name>ATP</name>
        <dbReference type="ChEBI" id="CHEBI:30616"/>
    </ligand>
</feature>
<comment type="catalytic activity">
    <reaction evidence="1">
        <text>shikimate + ATP = 3-phosphoshikimate + ADP + H(+)</text>
        <dbReference type="Rhea" id="RHEA:13121"/>
        <dbReference type="ChEBI" id="CHEBI:15378"/>
        <dbReference type="ChEBI" id="CHEBI:30616"/>
        <dbReference type="ChEBI" id="CHEBI:36208"/>
        <dbReference type="ChEBI" id="CHEBI:145989"/>
        <dbReference type="ChEBI" id="CHEBI:456216"/>
        <dbReference type="EC" id="2.7.1.71"/>
    </reaction>
</comment>
<comment type="pathway">
    <text evidence="1">Metabolic intermediate biosynthesis; chorismate biosynthesis; chorismate from D-erythrose 4-phosphate and phosphoenolpyruvate: step 5/7.</text>
</comment>
<comment type="subcellular location">
    <subcellularLocation>
        <location evidence="1">Cytoplasm</location>
    </subcellularLocation>
</comment>
<comment type="similarity">
    <text evidence="1">Belongs to the shikimate kinase family.</text>
</comment>
<reference key="1">
    <citation type="submission" date="2005-10" db="EMBL/GenBank/DDBJ databases">
        <title>Complete sequence of Pelobacter carbinolicus DSM 2380.</title>
        <authorList>
            <person name="Copeland A."/>
            <person name="Lucas S."/>
            <person name="Lapidus A."/>
            <person name="Barry K."/>
            <person name="Detter J.C."/>
            <person name="Glavina T."/>
            <person name="Hammon N."/>
            <person name="Israni S."/>
            <person name="Pitluck S."/>
            <person name="Chertkov O."/>
            <person name="Schmutz J."/>
            <person name="Larimer F."/>
            <person name="Land M."/>
            <person name="Kyrpides N."/>
            <person name="Ivanova N."/>
            <person name="Richardson P."/>
        </authorList>
    </citation>
    <scope>NUCLEOTIDE SEQUENCE [LARGE SCALE GENOMIC DNA]</scope>
    <source>
        <strain>DSM 2380 / NBRC 103641 / GraBd1</strain>
    </source>
</reference>
<dbReference type="EC" id="2.7.1.71" evidence="1"/>
<dbReference type="EMBL" id="CP000142">
    <property type="protein sequence ID" value="ABA89413.1"/>
    <property type="molecule type" value="Genomic_DNA"/>
</dbReference>
<dbReference type="RefSeq" id="WP_011341926.1">
    <property type="nucleotide sequence ID" value="NC_007498.2"/>
</dbReference>
<dbReference type="SMR" id="Q3A2J4"/>
<dbReference type="STRING" id="338963.Pcar_2174"/>
<dbReference type="KEGG" id="pca:Pcar_2174"/>
<dbReference type="eggNOG" id="COG0703">
    <property type="taxonomic scope" value="Bacteria"/>
</dbReference>
<dbReference type="HOGENOM" id="CLU_057607_4_3_7"/>
<dbReference type="OrthoDB" id="9800332at2"/>
<dbReference type="UniPathway" id="UPA00053">
    <property type="reaction ID" value="UER00088"/>
</dbReference>
<dbReference type="Proteomes" id="UP000002534">
    <property type="component" value="Chromosome"/>
</dbReference>
<dbReference type="GO" id="GO:0005829">
    <property type="term" value="C:cytosol"/>
    <property type="evidence" value="ECO:0007669"/>
    <property type="project" value="TreeGrafter"/>
</dbReference>
<dbReference type="GO" id="GO:0005524">
    <property type="term" value="F:ATP binding"/>
    <property type="evidence" value="ECO:0007669"/>
    <property type="project" value="UniProtKB-UniRule"/>
</dbReference>
<dbReference type="GO" id="GO:0000287">
    <property type="term" value="F:magnesium ion binding"/>
    <property type="evidence" value="ECO:0007669"/>
    <property type="project" value="UniProtKB-UniRule"/>
</dbReference>
<dbReference type="GO" id="GO:0004765">
    <property type="term" value="F:shikimate kinase activity"/>
    <property type="evidence" value="ECO:0007669"/>
    <property type="project" value="UniProtKB-UniRule"/>
</dbReference>
<dbReference type="GO" id="GO:0008652">
    <property type="term" value="P:amino acid biosynthetic process"/>
    <property type="evidence" value="ECO:0007669"/>
    <property type="project" value="UniProtKB-KW"/>
</dbReference>
<dbReference type="GO" id="GO:0009073">
    <property type="term" value="P:aromatic amino acid family biosynthetic process"/>
    <property type="evidence" value="ECO:0007669"/>
    <property type="project" value="UniProtKB-KW"/>
</dbReference>
<dbReference type="GO" id="GO:0009423">
    <property type="term" value="P:chorismate biosynthetic process"/>
    <property type="evidence" value="ECO:0007669"/>
    <property type="project" value="UniProtKB-UniRule"/>
</dbReference>
<dbReference type="CDD" id="cd00464">
    <property type="entry name" value="SK"/>
    <property type="match status" value="1"/>
</dbReference>
<dbReference type="Gene3D" id="3.40.50.300">
    <property type="entry name" value="P-loop containing nucleotide triphosphate hydrolases"/>
    <property type="match status" value="1"/>
</dbReference>
<dbReference type="HAMAP" id="MF_00109">
    <property type="entry name" value="Shikimate_kinase"/>
    <property type="match status" value="1"/>
</dbReference>
<dbReference type="InterPro" id="IPR027417">
    <property type="entry name" value="P-loop_NTPase"/>
</dbReference>
<dbReference type="InterPro" id="IPR031322">
    <property type="entry name" value="Shikimate/glucono_kinase"/>
</dbReference>
<dbReference type="InterPro" id="IPR000623">
    <property type="entry name" value="Shikimate_kinase/TSH1"/>
</dbReference>
<dbReference type="InterPro" id="IPR023000">
    <property type="entry name" value="Shikimate_kinase_CS"/>
</dbReference>
<dbReference type="NCBIfam" id="NF002988">
    <property type="entry name" value="PRK03731.1"/>
    <property type="match status" value="1"/>
</dbReference>
<dbReference type="PANTHER" id="PTHR21087">
    <property type="entry name" value="SHIKIMATE KINASE"/>
    <property type="match status" value="1"/>
</dbReference>
<dbReference type="PANTHER" id="PTHR21087:SF21">
    <property type="entry name" value="SHIKIMATE KINASE 2"/>
    <property type="match status" value="1"/>
</dbReference>
<dbReference type="Pfam" id="PF01202">
    <property type="entry name" value="SKI"/>
    <property type="match status" value="1"/>
</dbReference>
<dbReference type="PRINTS" id="PR01100">
    <property type="entry name" value="SHIKIMTKNASE"/>
</dbReference>
<dbReference type="SUPFAM" id="SSF52540">
    <property type="entry name" value="P-loop containing nucleoside triphosphate hydrolases"/>
    <property type="match status" value="1"/>
</dbReference>
<dbReference type="PROSITE" id="PS01128">
    <property type="entry name" value="SHIKIMATE_KINASE"/>
    <property type="match status" value="1"/>
</dbReference>